<name>HIS1_CYTH3</name>
<protein>
    <recommendedName>
        <fullName evidence="1">ATP phosphoribosyltransferase</fullName>
        <shortName evidence="1">ATP-PRT</shortName>
        <shortName evidence="1">ATP-PRTase</shortName>
        <ecNumber evidence="1">2.4.2.17</ecNumber>
    </recommendedName>
</protein>
<keyword id="KW-0028">Amino-acid biosynthesis</keyword>
<keyword id="KW-0067">ATP-binding</keyword>
<keyword id="KW-0963">Cytoplasm</keyword>
<keyword id="KW-0328">Glycosyltransferase</keyword>
<keyword id="KW-0368">Histidine biosynthesis</keyword>
<keyword id="KW-0460">Magnesium</keyword>
<keyword id="KW-0479">Metal-binding</keyword>
<keyword id="KW-0547">Nucleotide-binding</keyword>
<keyword id="KW-1185">Reference proteome</keyword>
<keyword id="KW-0808">Transferase</keyword>
<comment type="function">
    <text evidence="1">Catalyzes the condensation of ATP and 5-phosphoribose 1-diphosphate to form N'-(5'-phosphoribosyl)-ATP (PR-ATP). Has a crucial role in the pathway because the rate of histidine biosynthesis seems to be controlled primarily by regulation of HisG enzymatic activity.</text>
</comment>
<comment type="catalytic activity">
    <reaction evidence="1">
        <text>1-(5-phospho-beta-D-ribosyl)-ATP + diphosphate = 5-phospho-alpha-D-ribose 1-diphosphate + ATP</text>
        <dbReference type="Rhea" id="RHEA:18473"/>
        <dbReference type="ChEBI" id="CHEBI:30616"/>
        <dbReference type="ChEBI" id="CHEBI:33019"/>
        <dbReference type="ChEBI" id="CHEBI:58017"/>
        <dbReference type="ChEBI" id="CHEBI:73183"/>
        <dbReference type="EC" id="2.4.2.17"/>
    </reaction>
</comment>
<comment type="cofactor">
    <cofactor evidence="1">
        <name>Mg(2+)</name>
        <dbReference type="ChEBI" id="CHEBI:18420"/>
    </cofactor>
</comment>
<comment type="activity regulation">
    <text evidence="1">Feedback inhibited by histidine.</text>
</comment>
<comment type="pathway">
    <text evidence="1">Amino-acid biosynthesis; L-histidine biosynthesis; L-histidine from 5-phospho-alpha-D-ribose 1-diphosphate: step 1/9.</text>
</comment>
<comment type="subcellular location">
    <subcellularLocation>
        <location evidence="1">Cytoplasm</location>
    </subcellularLocation>
</comment>
<comment type="similarity">
    <text evidence="1">Belongs to the ATP phosphoribosyltransferase family. Long subfamily.</text>
</comment>
<gene>
    <name evidence="1" type="primary">hisG</name>
    <name type="ordered locus">CHU_1862</name>
</gene>
<organism>
    <name type="scientific">Cytophaga hutchinsonii (strain ATCC 33406 / DSM 1761 / CIP 103989 / NBRC 15051 / NCIMB 9469 / D465)</name>
    <dbReference type="NCBI Taxonomy" id="269798"/>
    <lineage>
        <taxon>Bacteria</taxon>
        <taxon>Pseudomonadati</taxon>
        <taxon>Bacteroidota</taxon>
        <taxon>Cytophagia</taxon>
        <taxon>Cytophagales</taxon>
        <taxon>Cytophagaceae</taxon>
        <taxon>Cytophaga</taxon>
    </lineage>
</organism>
<feature type="chain" id="PRO_1000004456" description="ATP phosphoribosyltransferase">
    <location>
        <begin position="1"/>
        <end position="286"/>
    </location>
</feature>
<sequence>MSTVLRLAIQKSGRLSEESIKLIKECGIEFSSGGGTLKSVAYNFPLEVLFLRDDDIPGYVADGVADIGIVGENVAVETRKKMDTVRQLGFSKCRLSIGVPKAMEFTGKESLNGMRIATSYPNILSDYLFENNIKASIHEISGSVEIAPGIGLADAICDIVSSGSTLISNGLKETEVVFRSEAILAACPQLSAEKKAILDELMFRISAVKNAEKTKYIMLNVPDHAIQTVTALLPGVKSPTVMPLAEKGWSSLHSVVKESDFWEILSKLKEAGAEGILVLPIEKIVK</sequence>
<dbReference type="EC" id="2.4.2.17" evidence="1"/>
<dbReference type="EMBL" id="CP000383">
    <property type="protein sequence ID" value="ABG59128.1"/>
    <property type="molecule type" value="Genomic_DNA"/>
</dbReference>
<dbReference type="RefSeq" id="WP_011585245.1">
    <property type="nucleotide sequence ID" value="NC_008255.1"/>
</dbReference>
<dbReference type="SMR" id="Q11TY6"/>
<dbReference type="STRING" id="269798.CHU_1862"/>
<dbReference type="KEGG" id="chu:CHU_1862"/>
<dbReference type="eggNOG" id="COG0040">
    <property type="taxonomic scope" value="Bacteria"/>
</dbReference>
<dbReference type="HOGENOM" id="CLU_038115_1_0_10"/>
<dbReference type="OrthoDB" id="9801867at2"/>
<dbReference type="UniPathway" id="UPA00031">
    <property type="reaction ID" value="UER00006"/>
</dbReference>
<dbReference type="Proteomes" id="UP000001822">
    <property type="component" value="Chromosome"/>
</dbReference>
<dbReference type="GO" id="GO:0005737">
    <property type="term" value="C:cytoplasm"/>
    <property type="evidence" value="ECO:0007669"/>
    <property type="project" value="UniProtKB-SubCell"/>
</dbReference>
<dbReference type="GO" id="GO:0005524">
    <property type="term" value="F:ATP binding"/>
    <property type="evidence" value="ECO:0007669"/>
    <property type="project" value="UniProtKB-KW"/>
</dbReference>
<dbReference type="GO" id="GO:0003879">
    <property type="term" value="F:ATP phosphoribosyltransferase activity"/>
    <property type="evidence" value="ECO:0007669"/>
    <property type="project" value="UniProtKB-UniRule"/>
</dbReference>
<dbReference type="GO" id="GO:0000287">
    <property type="term" value="F:magnesium ion binding"/>
    <property type="evidence" value="ECO:0007669"/>
    <property type="project" value="UniProtKB-UniRule"/>
</dbReference>
<dbReference type="GO" id="GO:0000105">
    <property type="term" value="P:L-histidine biosynthetic process"/>
    <property type="evidence" value="ECO:0007669"/>
    <property type="project" value="UniProtKB-UniRule"/>
</dbReference>
<dbReference type="CDD" id="cd13592">
    <property type="entry name" value="PBP2_HisGL2"/>
    <property type="match status" value="1"/>
</dbReference>
<dbReference type="FunFam" id="3.30.70.120:FF:000002">
    <property type="entry name" value="ATP phosphoribosyltransferase"/>
    <property type="match status" value="1"/>
</dbReference>
<dbReference type="FunFam" id="3.40.190.10:FF:000008">
    <property type="entry name" value="ATP phosphoribosyltransferase"/>
    <property type="match status" value="1"/>
</dbReference>
<dbReference type="Gene3D" id="3.30.70.120">
    <property type="match status" value="1"/>
</dbReference>
<dbReference type="Gene3D" id="3.40.190.10">
    <property type="entry name" value="Periplasmic binding protein-like II"/>
    <property type="match status" value="2"/>
</dbReference>
<dbReference type="HAMAP" id="MF_00079">
    <property type="entry name" value="HisG_Long"/>
    <property type="match status" value="1"/>
</dbReference>
<dbReference type="InterPro" id="IPR020621">
    <property type="entry name" value="ATP-PRT_HisG_long"/>
</dbReference>
<dbReference type="InterPro" id="IPR013820">
    <property type="entry name" value="ATP_PRibTrfase_cat"/>
</dbReference>
<dbReference type="InterPro" id="IPR018198">
    <property type="entry name" value="ATP_PRibTrfase_CS"/>
</dbReference>
<dbReference type="InterPro" id="IPR001348">
    <property type="entry name" value="ATP_PRibTrfase_HisG"/>
</dbReference>
<dbReference type="InterPro" id="IPR013115">
    <property type="entry name" value="HisG_C"/>
</dbReference>
<dbReference type="InterPro" id="IPR011322">
    <property type="entry name" value="N-reg_PII-like_a/b"/>
</dbReference>
<dbReference type="InterPro" id="IPR015867">
    <property type="entry name" value="N-reg_PII/ATP_PRibTrfase_C"/>
</dbReference>
<dbReference type="NCBIfam" id="TIGR00070">
    <property type="entry name" value="hisG"/>
    <property type="match status" value="1"/>
</dbReference>
<dbReference type="NCBIfam" id="TIGR03455">
    <property type="entry name" value="HisG_C-term"/>
    <property type="match status" value="1"/>
</dbReference>
<dbReference type="PANTHER" id="PTHR21403:SF8">
    <property type="entry name" value="ATP PHOSPHORIBOSYLTRANSFERASE"/>
    <property type="match status" value="1"/>
</dbReference>
<dbReference type="PANTHER" id="PTHR21403">
    <property type="entry name" value="ATP PHOSPHORIBOSYLTRANSFERASE ATP-PRTASE"/>
    <property type="match status" value="1"/>
</dbReference>
<dbReference type="Pfam" id="PF01634">
    <property type="entry name" value="HisG"/>
    <property type="match status" value="1"/>
</dbReference>
<dbReference type="Pfam" id="PF08029">
    <property type="entry name" value="HisG_C"/>
    <property type="match status" value="1"/>
</dbReference>
<dbReference type="SUPFAM" id="SSF54913">
    <property type="entry name" value="GlnB-like"/>
    <property type="match status" value="1"/>
</dbReference>
<dbReference type="SUPFAM" id="SSF53850">
    <property type="entry name" value="Periplasmic binding protein-like II"/>
    <property type="match status" value="1"/>
</dbReference>
<dbReference type="PROSITE" id="PS01316">
    <property type="entry name" value="ATP_P_PHORIBOSYLTR"/>
    <property type="match status" value="1"/>
</dbReference>
<evidence type="ECO:0000255" key="1">
    <source>
        <dbReference type="HAMAP-Rule" id="MF_00079"/>
    </source>
</evidence>
<reference key="1">
    <citation type="journal article" date="2007" name="Appl. Environ. Microbiol.">
        <title>Genome sequence of the cellulolytic gliding bacterium Cytophaga hutchinsonii.</title>
        <authorList>
            <person name="Xie G."/>
            <person name="Bruce D.C."/>
            <person name="Challacombe J.F."/>
            <person name="Chertkov O."/>
            <person name="Detter J.C."/>
            <person name="Gilna P."/>
            <person name="Han C.S."/>
            <person name="Lucas S."/>
            <person name="Misra M."/>
            <person name="Myers G.L."/>
            <person name="Richardson P."/>
            <person name="Tapia R."/>
            <person name="Thayer N."/>
            <person name="Thompson L.S."/>
            <person name="Brettin T.S."/>
            <person name="Henrissat B."/>
            <person name="Wilson D.B."/>
            <person name="McBride M.J."/>
        </authorList>
    </citation>
    <scope>NUCLEOTIDE SEQUENCE [LARGE SCALE GENOMIC DNA]</scope>
    <source>
        <strain>ATCC 33406 / DSM 1761 / JCM 20678 / CIP 103989 / IAM 12607 / NBRC 15051 / NCIMB 9469 / D465</strain>
    </source>
</reference>
<accession>Q11TY6</accession>
<proteinExistence type="inferred from homology"/>